<organism>
    <name type="scientific">Bacillus subtilis (strain 168)</name>
    <dbReference type="NCBI Taxonomy" id="224308"/>
    <lineage>
        <taxon>Bacteria</taxon>
        <taxon>Bacillati</taxon>
        <taxon>Bacillota</taxon>
        <taxon>Bacilli</taxon>
        <taxon>Bacillales</taxon>
        <taxon>Bacillaceae</taxon>
        <taxon>Bacillus</taxon>
    </lineage>
</organism>
<evidence type="ECO:0000250" key="1"/>
<evidence type="ECO:0000269" key="2">
    <source>
    </source>
</evidence>
<evidence type="ECO:0000305" key="3"/>
<accession>O34364</accession>
<accession>Q797R7</accession>
<name>O16G2_BACSU</name>
<proteinExistence type="evidence at transcript level"/>
<comment type="catalytic activity">
    <reaction>
        <text>Hydrolysis of (1-&gt;6)-alpha-D-glucosidic linkages in some oligosaccharides produced from starch and glycogen by alpha-amylase, and in isomaltose.</text>
        <dbReference type="EC" id="3.2.1.10"/>
    </reaction>
</comment>
<comment type="subcellular location">
    <subcellularLocation>
        <location evidence="1">Cytoplasm</location>
    </subcellularLocation>
</comment>
<comment type="induction">
    <text evidence="2">By ethanol, heat and salt via sigma B-dependent promoter.</text>
</comment>
<comment type="similarity">
    <text evidence="3">Belongs to the glycosyl hydrolase 13 family.</text>
</comment>
<keyword id="KW-0963">Cytoplasm</keyword>
<keyword id="KW-0326">Glycosidase</keyword>
<keyword id="KW-0378">Hydrolase</keyword>
<keyword id="KW-1185">Reference proteome</keyword>
<feature type="chain" id="PRO_0000360818" description="Probable oligo-1,6-glucosidase 2">
    <location>
        <begin position="1"/>
        <end position="561"/>
    </location>
</feature>
<feature type="active site" description="Nucleophile" evidence="1">
    <location>
        <position position="199"/>
    </location>
</feature>
<feature type="active site" description="Proton donor" evidence="1">
    <location>
        <position position="255"/>
    </location>
</feature>
<feature type="site" description="Transition state stabilizer" evidence="1">
    <location>
        <position position="330"/>
    </location>
</feature>
<protein>
    <recommendedName>
        <fullName>Probable oligo-1,6-glucosidase 2</fullName>
        <ecNumber>3.2.1.10</ecNumber>
    </recommendedName>
    <alternativeName>
        <fullName>Oligosaccharide alpha-1,6-glucosidase 2</fullName>
    </alternativeName>
    <alternativeName>
        <fullName>Sucrase-isomaltase 2</fullName>
        <shortName>Isomaltase 2</shortName>
    </alternativeName>
</protein>
<dbReference type="EC" id="3.2.1.10"/>
<dbReference type="EMBL" id="AB000617">
    <property type="protein sequence ID" value="BAA22245.1"/>
    <property type="molecule type" value="Genomic_DNA"/>
</dbReference>
<dbReference type="EMBL" id="AL009126">
    <property type="protein sequence ID" value="CAB12078.1"/>
    <property type="molecule type" value="Genomic_DNA"/>
</dbReference>
<dbReference type="PIR" id="H69755">
    <property type="entry name" value="H69755"/>
</dbReference>
<dbReference type="RefSeq" id="NP_388166.1">
    <property type="nucleotide sequence ID" value="NC_000964.3"/>
</dbReference>
<dbReference type="RefSeq" id="WP_003234736.1">
    <property type="nucleotide sequence ID" value="NZ_OZ025638.1"/>
</dbReference>
<dbReference type="SMR" id="O34364"/>
<dbReference type="FunCoup" id="O34364">
    <property type="interactions" value="173"/>
</dbReference>
<dbReference type="STRING" id="224308.BSU02840"/>
<dbReference type="CAZy" id="GH13">
    <property type="family name" value="Glycoside Hydrolase Family 13"/>
</dbReference>
<dbReference type="PaxDb" id="224308-BSU02840"/>
<dbReference type="EnsemblBacteria" id="CAB12078">
    <property type="protein sequence ID" value="CAB12078"/>
    <property type="gene ID" value="BSU_02840"/>
</dbReference>
<dbReference type="GeneID" id="938375"/>
<dbReference type="KEGG" id="bsu:BSU02840"/>
<dbReference type="PATRIC" id="fig|224308.179.peg.295"/>
<dbReference type="eggNOG" id="COG0366">
    <property type="taxonomic scope" value="Bacteria"/>
</dbReference>
<dbReference type="InParanoid" id="O34364"/>
<dbReference type="OrthoDB" id="9805159at2"/>
<dbReference type="PhylomeDB" id="O34364"/>
<dbReference type="BioCyc" id="BSUB:BSU02840-MONOMER"/>
<dbReference type="Proteomes" id="UP000001570">
    <property type="component" value="Chromosome"/>
</dbReference>
<dbReference type="GO" id="GO:0005737">
    <property type="term" value="C:cytoplasm"/>
    <property type="evidence" value="ECO:0007669"/>
    <property type="project" value="UniProtKB-SubCell"/>
</dbReference>
<dbReference type="GO" id="GO:0004556">
    <property type="term" value="F:alpha-amylase activity"/>
    <property type="evidence" value="ECO:0000318"/>
    <property type="project" value="GO_Central"/>
</dbReference>
<dbReference type="GO" id="GO:0004574">
    <property type="term" value="F:oligo-1,6-glucosidase activity"/>
    <property type="evidence" value="ECO:0007669"/>
    <property type="project" value="UniProtKB-EC"/>
</dbReference>
<dbReference type="GO" id="GO:0009313">
    <property type="term" value="P:oligosaccharide catabolic process"/>
    <property type="evidence" value="ECO:0000318"/>
    <property type="project" value="GO_Central"/>
</dbReference>
<dbReference type="CDD" id="cd11333">
    <property type="entry name" value="AmyAc_SI_OligoGlu_DGase"/>
    <property type="match status" value="1"/>
</dbReference>
<dbReference type="FunFam" id="3.20.20.80:FF:000014">
    <property type="entry name" value="Alpha,alpha-phosphotrehalase"/>
    <property type="match status" value="1"/>
</dbReference>
<dbReference type="FunFam" id="3.20.20.80:FF:000064">
    <property type="entry name" value="Oligo-1,6-glucosidase"/>
    <property type="match status" value="1"/>
</dbReference>
<dbReference type="FunFam" id="3.90.400.10:FF:000008">
    <property type="entry name" value="Oligo-1,6-glucosidase"/>
    <property type="match status" value="1"/>
</dbReference>
<dbReference type="FunFam" id="2.60.40.1180:FF:000007">
    <property type="entry name" value="Sucrose isomerase"/>
    <property type="match status" value="1"/>
</dbReference>
<dbReference type="Gene3D" id="3.20.20.80">
    <property type="entry name" value="Glycosidases"/>
    <property type="match status" value="1"/>
</dbReference>
<dbReference type="Gene3D" id="2.60.40.1180">
    <property type="entry name" value="Golgi alpha-mannosidase II"/>
    <property type="match status" value="1"/>
</dbReference>
<dbReference type="Gene3D" id="3.90.400.10">
    <property type="entry name" value="Oligo-1,6-glucosidase, Domain 2"/>
    <property type="match status" value="1"/>
</dbReference>
<dbReference type="InterPro" id="IPR006047">
    <property type="entry name" value="Glyco_hydro_13_cat_dom"/>
</dbReference>
<dbReference type="InterPro" id="IPR013780">
    <property type="entry name" value="Glyco_hydro_b"/>
</dbReference>
<dbReference type="InterPro" id="IPR017853">
    <property type="entry name" value="Glycoside_hydrolase_SF"/>
</dbReference>
<dbReference type="InterPro" id="IPR045857">
    <property type="entry name" value="O16G_dom_2"/>
</dbReference>
<dbReference type="InterPro" id="IPR056300">
    <property type="entry name" value="SusG-like_C"/>
</dbReference>
<dbReference type="NCBIfam" id="NF008183">
    <property type="entry name" value="PRK10933.1"/>
    <property type="match status" value="1"/>
</dbReference>
<dbReference type="PANTHER" id="PTHR10357">
    <property type="entry name" value="ALPHA-AMYLASE FAMILY MEMBER"/>
    <property type="match status" value="1"/>
</dbReference>
<dbReference type="PANTHER" id="PTHR10357:SF184">
    <property type="entry name" value="OLIGO-1,6-GLUCOSIDASE 1"/>
    <property type="match status" value="1"/>
</dbReference>
<dbReference type="Pfam" id="PF00128">
    <property type="entry name" value="Alpha-amylase"/>
    <property type="match status" value="1"/>
</dbReference>
<dbReference type="Pfam" id="PF23915">
    <property type="entry name" value="SusG_C"/>
    <property type="match status" value="1"/>
</dbReference>
<dbReference type="SMART" id="SM00642">
    <property type="entry name" value="Aamy"/>
    <property type="match status" value="1"/>
</dbReference>
<dbReference type="SUPFAM" id="SSF51445">
    <property type="entry name" value="(Trans)glycosidases"/>
    <property type="match status" value="1"/>
</dbReference>
<dbReference type="SUPFAM" id="SSF51011">
    <property type="entry name" value="Glycosyl hydrolase domain"/>
    <property type="match status" value="1"/>
</dbReference>
<gene>
    <name type="primary">ycdG</name>
    <name type="ordered locus">BSU02840</name>
</gene>
<reference key="1">
    <citation type="journal article" date="1997" name="Microbiology">
        <title>A 32 kb nucleotide sequence from the region of the lincomycin-resistance gene (22 degrees-25 degrees) of the Bacillus subtilis chromosome and identification of the site of the lin-2 mutation.</title>
        <authorList>
            <person name="Kumano M."/>
            <person name="Tamakoshi A."/>
            <person name="Yamane K."/>
        </authorList>
    </citation>
    <scope>NUCLEOTIDE SEQUENCE [GENOMIC DNA]</scope>
    <source>
        <strain>168</strain>
    </source>
</reference>
<reference key="2">
    <citation type="journal article" date="1997" name="Nature">
        <title>The complete genome sequence of the Gram-positive bacterium Bacillus subtilis.</title>
        <authorList>
            <person name="Kunst F."/>
            <person name="Ogasawara N."/>
            <person name="Moszer I."/>
            <person name="Albertini A.M."/>
            <person name="Alloni G."/>
            <person name="Azevedo V."/>
            <person name="Bertero M.G."/>
            <person name="Bessieres P."/>
            <person name="Bolotin A."/>
            <person name="Borchert S."/>
            <person name="Borriss R."/>
            <person name="Boursier L."/>
            <person name="Brans A."/>
            <person name="Braun M."/>
            <person name="Brignell S.C."/>
            <person name="Bron S."/>
            <person name="Brouillet S."/>
            <person name="Bruschi C.V."/>
            <person name="Caldwell B."/>
            <person name="Capuano V."/>
            <person name="Carter N.M."/>
            <person name="Choi S.-K."/>
            <person name="Codani J.-J."/>
            <person name="Connerton I.F."/>
            <person name="Cummings N.J."/>
            <person name="Daniel R.A."/>
            <person name="Denizot F."/>
            <person name="Devine K.M."/>
            <person name="Duesterhoeft A."/>
            <person name="Ehrlich S.D."/>
            <person name="Emmerson P.T."/>
            <person name="Entian K.-D."/>
            <person name="Errington J."/>
            <person name="Fabret C."/>
            <person name="Ferrari E."/>
            <person name="Foulger D."/>
            <person name="Fritz C."/>
            <person name="Fujita M."/>
            <person name="Fujita Y."/>
            <person name="Fuma S."/>
            <person name="Galizzi A."/>
            <person name="Galleron N."/>
            <person name="Ghim S.-Y."/>
            <person name="Glaser P."/>
            <person name="Goffeau A."/>
            <person name="Golightly E.J."/>
            <person name="Grandi G."/>
            <person name="Guiseppi G."/>
            <person name="Guy B.J."/>
            <person name="Haga K."/>
            <person name="Haiech J."/>
            <person name="Harwood C.R."/>
            <person name="Henaut A."/>
            <person name="Hilbert H."/>
            <person name="Holsappel S."/>
            <person name="Hosono S."/>
            <person name="Hullo M.-F."/>
            <person name="Itaya M."/>
            <person name="Jones L.-M."/>
            <person name="Joris B."/>
            <person name="Karamata D."/>
            <person name="Kasahara Y."/>
            <person name="Klaerr-Blanchard M."/>
            <person name="Klein C."/>
            <person name="Kobayashi Y."/>
            <person name="Koetter P."/>
            <person name="Koningstein G."/>
            <person name="Krogh S."/>
            <person name="Kumano M."/>
            <person name="Kurita K."/>
            <person name="Lapidus A."/>
            <person name="Lardinois S."/>
            <person name="Lauber J."/>
            <person name="Lazarevic V."/>
            <person name="Lee S.-M."/>
            <person name="Levine A."/>
            <person name="Liu H."/>
            <person name="Masuda S."/>
            <person name="Mauel C."/>
            <person name="Medigue C."/>
            <person name="Medina N."/>
            <person name="Mellado R.P."/>
            <person name="Mizuno M."/>
            <person name="Moestl D."/>
            <person name="Nakai S."/>
            <person name="Noback M."/>
            <person name="Noone D."/>
            <person name="O'Reilly M."/>
            <person name="Ogawa K."/>
            <person name="Ogiwara A."/>
            <person name="Oudega B."/>
            <person name="Park S.-H."/>
            <person name="Parro V."/>
            <person name="Pohl T.M."/>
            <person name="Portetelle D."/>
            <person name="Porwollik S."/>
            <person name="Prescott A.M."/>
            <person name="Presecan E."/>
            <person name="Pujic P."/>
            <person name="Purnelle B."/>
            <person name="Rapoport G."/>
            <person name="Rey M."/>
            <person name="Reynolds S."/>
            <person name="Rieger M."/>
            <person name="Rivolta C."/>
            <person name="Rocha E."/>
            <person name="Roche B."/>
            <person name="Rose M."/>
            <person name="Sadaie Y."/>
            <person name="Sato T."/>
            <person name="Scanlan E."/>
            <person name="Schleich S."/>
            <person name="Schroeter R."/>
            <person name="Scoffone F."/>
            <person name="Sekiguchi J."/>
            <person name="Sekowska A."/>
            <person name="Seror S.J."/>
            <person name="Serror P."/>
            <person name="Shin B.-S."/>
            <person name="Soldo B."/>
            <person name="Sorokin A."/>
            <person name="Tacconi E."/>
            <person name="Takagi T."/>
            <person name="Takahashi H."/>
            <person name="Takemaru K."/>
            <person name="Takeuchi M."/>
            <person name="Tamakoshi A."/>
            <person name="Tanaka T."/>
            <person name="Terpstra P."/>
            <person name="Tognoni A."/>
            <person name="Tosato V."/>
            <person name="Uchiyama S."/>
            <person name="Vandenbol M."/>
            <person name="Vannier F."/>
            <person name="Vassarotti A."/>
            <person name="Viari A."/>
            <person name="Wambutt R."/>
            <person name="Wedler E."/>
            <person name="Wedler H."/>
            <person name="Weitzenegger T."/>
            <person name="Winters P."/>
            <person name="Wipat A."/>
            <person name="Yamamoto H."/>
            <person name="Yamane K."/>
            <person name="Yasumoto K."/>
            <person name="Yata K."/>
            <person name="Yoshida K."/>
            <person name="Yoshikawa H.-F."/>
            <person name="Zumstein E."/>
            <person name="Yoshikawa H."/>
            <person name="Danchin A."/>
        </authorList>
    </citation>
    <scope>NUCLEOTIDE SEQUENCE [LARGE SCALE GENOMIC DNA]</scope>
    <source>
        <strain>168</strain>
    </source>
</reference>
<reference key="3">
    <citation type="journal article" date="2001" name="J. Bacteriol.">
        <title>Global analysis of the general stress response of Bacillus subtilis.</title>
        <authorList>
            <person name="Petersohn A."/>
            <person name="Brigulla M."/>
            <person name="Haas S."/>
            <person name="Hoheisel J.D."/>
            <person name="Voelker U."/>
            <person name="Hecker M."/>
        </authorList>
    </citation>
    <scope>INDUCTION</scope>
</reference>
<sequence>MKTDWWKDAVVYQIYPRSFQDSNGDGIGDLRGIISRLDYIKELGADVIWICPIYPSPNVDYGYDVTNHKAIMDSYGTMDDFHELLDQVHQRGLKLVMDFVLNHTSVEHPWFKEAELDKNSKYRSYYYWRPGTKNGPPTDWLSNYGCPVWQYEEHTGEYYLHMNAVKQADLNWENPEVRQAVYDMMKFWLDKGVDGLRIDQLHLISKKEYLPSYEDYINQQAEPKPFQPNGERIHDYLKEITDEVFSHYDVMSVGEVGSVTPEEGLKYTGTDKHELNMIFHFQHMELDQQPGKEHWDLKPLELSDLKSVLTKWQKKLEHQGWNTLFWCNHDQPRIVSRFGDDGEYRKASAKMLAAVIYFMKGTPYIYQGEEIGMTNAPFTRIEDYKDIQTINMYHKRVFEKGYDPNDVMRSILAKSRDHARTPMQWNSGKNAGFTDGTPWLKVNPNFTAINVEEAQGDPDSVLNYYKKLISLRKQYADLMKGSFDLLLPDDPQLFVYMRENSKQQLLSVNNFSKEQAVFQWPKNCGKAQASLLLSNYNNDDLDDEMVFRPYESRVYLLDKTN</sequence>